<dbReference type="EC" id="1.1.-.-" evidence="1"/>
<dbReference type="EMBL" id="CP000075">
    <property type="protein sequence ID" value="AAY35966.1"/>
    <property type="molecule type" value="Genomic_DNA"/>
</dbReference>
<dbReference type="RefSeq" id="WP_011266707.1">
    <property type="nucleotide sequence ID" value="NC_007005.1"/>
</dbReference>
<dbReference type="RefSeq" id="YP_234004.1">
    <property type="nucleotide sequence ID" value="NC_007005.1"/>
</dbReference>
<dbReference type="SMR" id="Q4ZY06"/>
<dbReference type="STRING" id="205918.Psyr_0908"/>
<dbReference type="KEGG" id="psb:Psyr_0908"/>
<dbReference type="PATRIC" id="fig|205918.7.peg.938"/>
<dbReference type="eggNOG" id="COG1304">
    <property type="taxonomic scope" value="Bacteria"/>
</dbReference>
<dbReference type="HOGENOM" id="CLU_020639_0_0_6"/>
<dbReference type="OrthoDB" id="9770452at2"/>
<dbReference type="Proteomes" id="UP000000426">
    <property type="component" value="Chromosome"/>
</dbReference>
<dbReference type="GO" id="GO:0005886">
    <property type="term" value="C:plasma membrane"/>
    <property type="evidence" value="ECO:0007669"/>
    <property type="project" value="UniProtKB-SubCell"/>
</dbReference>
<dbReference type="GO" id="GO:0010181">
    <property type="term" value="F:FMN binding"/>
    <property type="evidence" value="ECO:0007669"/>
    <property type="project" value="InterPro"/>
</dbReference>
<dbReference type="GO" id="GO:0004459">
    <property type="term" value="F:L-lactate dehydrogenase activity"/>
    <property type="evidence" value="ECO:0007669"/>
    <property type="project" value="UniProtKB-UniRule"/>
</dbReference>
<dbReference type="GO" id="GO:0009060">
    <property type="term" value="P:aerobic respiration"/>
    <property type="evidence" value="ECO:0007669"/>
    <property type="project" value="TreeGrafter"/>
</dbReference>
<dbReference type="GO" id="GO:0006089">
    <property type="term" value="P:lactate metabolic process"/>
    <property type="evidence" value="ECO:0007669"/>
    <property type="project" value="UniProtKB-UniRule"/>
</dbReference>
<dbReference type="CDD" id="cd02809">
    <property type="entry name" value="alpha_hydroxyacid_oxid_FMN"/>
    <property type="match status" value="1"/>
</dbReference>
<dbReference type="FunFam" id="3.20.20.70:FF:000029">
    <property type="entry name" value="L-lactate dehydrogenase"/>
    <property type="match status" value="1"/>
</dbReference>
<dbReference type="Gene3D" id="3.20.20.70">
    <property type="entry name" value="Aldolase class I"/>
    <property type="match status" value="1"/>
</dbReference>
<dbReference type="HAMAP" id="MF_01559">
    <property type="entry name" value="L_lact_dehydr"/>
    <property type="match status" value="1"/>
</dbReference>
<dbReference type="InterPro" id="IPR013785">
    <property type="entry name" value="Aldolase_TIM"/>
</dbReference>
<dbReference type="InterPro" id="IPR012133">
    <property type="entry name" value="Alpha-hydoxy_acid_DH_FMN"/>
</dbReference>
<dbReference type="InterPro" id="IPR000262">
    <property type="entry name" value="FMN-dep_DH"/>
</dbReference>
<dbReference type="InterPro" id="IPR037396">
    <property type="entry name" value="FMN_HAD"/>
</dbReference>
<dbReference type="InterPro" id="IPR008259">
    <property type="entry name" value="FMN_hydac_DH_AS"/>
</dbReference>
<dbReference type="InterPro" id="IPR020920">
    <property type="entry name" value="LldD"/>
</dbReference>
<dbReference type="NCBIfam" id="NF033901">
    <property type="entry name" value="L_lactate_LldD"/>
    <property type="match status" value="1"/>
</dbReference>
<dbReference type="NCBIfam" id="NF008398">
    <property type="entry name" value="PRK11197.1"/>
    <property type="match status" value="1"/>
</dbReference>
<dbReference type="PANTHER" id="PTHR10578:SF85">
    <property type="entry name" value="L-LACTATE DEHYDROGENASE"/>
    <property type="match status" value="1"/>
</dbReference>
<dbReference type="PANTHER" id="PTHR10578">
    <property type="entry name" value="S -2-HYDROXY-ACID OXIDASE-RELATED"/>
    <property type="match status" value="1"/>
</dbReference>
<dbReference type="Pfam" id="PF01070">
    <property type="entry name" value="FMN_dh"/>
    <property type="match status" value="1"/>
</dbReference>
<dbReference type="PIRSF" id="PIRSF000138">
    <property type="entry name" value="Al-hdrx_acd_dh"/>
    <property type="match status" value="1"/>
</dbReference>
<dbReference type="SUPFAM" id="SSF51395">
    <property type="entry name" value="FMN-linked oxidoreductases"/>
    <property type="match status" value="1"/>
</dbReference>
<dbReference type="PROSITE" id="PS00557">
    <property type="entry name" value="FMN_HYDROXY_ACID_DH_1"/>
    <property type="match status" value="1"/>
</dbReference>
<dbReference type="PROSITE" id="PS51349">
    <property type="entry name" value="FMN_HYDROXY_ACID_DH_2"/>
    <property type="match status" value="1"/>
</dbReference>
<protein>
    <recommendedName>
        <fullName evidence="1">L-lactate dehydrogenase</fullName>
        <ecNumber evidence="1">1.1.-.-</ecNumber>
    </recommendedName>
</protein>
<feature type="chain" id="PRO_0000206343" description="L-lactate dehydrogenase">
    <location>
        <begin position="1"/>
        <end position="380"/>
    </location>
</feature>
<feature type="domain" description="FMN hydroxy acid dehydrogenase" evidence="1">
    <location>
        <begin position="1"/>
        <end position="380"/>
    </location>
</feature>
<feature type="active site" description="Proton acceptor" evidence="1">
    <location>
        <position position="275"/>
    </location>
</feature>
<feature type="binding site" evidence="1">
    <location>
        <position position="24"/>
    </location>
    <ligand>
        <name>substrate</name>
    </ligand>
</feature>
<feature type="binding site" evidence="1">
    <location>
        <position position="106"/>
    </location>
    <ligand>
        <name>FMN</name>
        <dbReference type="ChEBI" id="CHEBI:58210"/>
    </ligand>
</feature>
<feature type="binding site" evidence="1">
    <location>
        <position position="127"/>
    </location>
    <ligand>
        <name>FMN</name>
        <dbReference type="ChEBI" id="CHEBI:58210"/>
    </ligand>
</feature>
<feature type="binding site" evidence="1">
    <location>
        <position position="129"/>
    </location>
    <ligand>
        <name>substrate</name>
    </ligand>
</feature>
<feature type="binding site" evidence="1">
    <location>
        <position position="155"/>
    </location>
    <ligand>
        <name>FMN</name>
        <dbReference type="ChEBI" id="CHEBI:58210"/>
    </ligand>
</feature>
<feature type="binding site" evidence="1">
    <location>
        <position position="164"/>
    </location>
    <ligand>
        <name>substrate</name>
    </ligand>
</feature>
<feature type="binding site" evidence="1">
    <location>
        <position position="251"/>
    </location>
    <ligand>
        <name>FMN</name>
        <dbReference type="ChEBI" id="CHEBI:58210"/>
    </ligand>
</feature>
<feature type="binding site" evidence="1">
    <location>
        <position position="278"/>
    </location>
    <ligand>
        <name>substrate</name>
    </ligand>
</feature>
<feature type="binding site" evidence="1">
    <location>
        <begin position="306"/>
        <end position="330"/>
    </location>
    <ligand>
        <name>FMN</name>
        <dbReference type="ChEBI" id="CHEBI:58210"/>
    </ligand>
</feature>
<organism>
    <name type="scientific">Pseudomonas syringae pv. syringae (strain B728a)</name>
    <dbReference type="NCBI Taxonomy" id="205918"/>
    <lineage>
        <taxon>Bacteria</taxon>
        <taxon>Pseudomonadati</taxon>
        <taxon>Pseudomonadota</taxon>
        <taxon>Gammaproteobacteria</taxon>
        <taxon>Pseudomonadales</taxon>
        <taxon>Pseudomonadaceae</taxon>
        <taxon>Pseudomonas</taxon>
        <taxon>Pseudomonas syringae</taxon>
    </lineage>
</organism>
<accession>Q4ZY06</accession>
<gene>
    <name evidence="1" type="primary">lldD</name>
    <name type="ordered locus">Psyr_0908</name>
</gene>
<evidence type="ECO:0000255" key="1">
    <source>
        <dbReference type="HAMAP-Rule" id="MF_01559"/>
    </source>
</evidence>
<sequence>MIISSASDYRAAAKRKLPRFLFDYIDGGAYAEHTLRANGSDLADISLRQRVLKNVDNVSLETRLFGESLAMPIILSPVGLSGMYARRGEVQVARAAANKRIPFCLSTVSVCSIEEVASQSDQAIWFQLYVLKDRGFMKNALERAKAAGVTTLVFTVDMPTPGARYRDAHSGMSGPYAAPRRILQAMTKPDWALNVGLLGRPHDLGNISRYLGKATTLEDYVGWLANNFDPSISWKDLEWIREFWQGPMIIKGILDPQDARDALSFGADGIVVSNHGGRQLDGVLSTAKALPPIVQAVGSDLTVLADSGIRSGLDVVRMLALGAKGVLLGRSMAYALGADGQRGVENMLDIFAREMHVAMTLTGVTSIEQIDASILVKAVA</sequence>
<keyword id="KW-0997">Cell inner membrane</keyword>
<keyword id="KW-1003">Cell membrane</keyword>
<keyword id="KW-0285">Flavoprotein</keyword>
<keyword id="KW-0288">FMN</keyword>
<keyword id="KW-0472">Membrane</keyword>
<keyword id="KW-0560">Oxidoreductase</keyword>
<name>LLDD_PSEU2</name>
<comment type="function">
    <text evidence="1">Catalyzes the conversion of L-lactate to pyruvate. Is coupled to the respiratory chain.</text>
</comment>
<comment type="catalytic activity">
    <reaction evidence="1">
        <text>(S)-lactate + A = pyruvate + AH2</text>
        <dbReference type="Rhea" id="RHEA:45816"/>
        <dbReference type="ChEBI" id="CHEBI:13193"/>
        <dbReference type="ChEBI" id="CHEBI:15361"/>
        <dbReference type="ChEBI" id="CHEBI:16651"/>
        <dbReference type="ChEBI" id="CHEBI:17499"/>
    </reaction>
</comment>
<comment type="cofactor">
    <cofactor evidence="1">
        <name>FMN</name>
        <dbReference type="ChEBI" id="CHEBI:58210"/>
    </cofactor>
</comment>
<comment type="subunit">
    <text evidence="1">Homotetramer.</text>
</comment>
<comment type="subcellular location">
    <subcellularLocation>
        <location evidence="1">Cell inner membrane</location>
        <topology evidence="1">Peripheral membrane protein</topology>
    </subcellularLocation>
</comment>
<comment type="similarity">
    <text evidence="1">Belongs to the FMN-dependent alpha-hydroxy acid dehydrogenase family.</text>
</comment>
<proteinExistence type="inferred from homology"/>
<reference key="1">
    <citation type="journal article" date="2005" name="Proc. Natl. Acad. Sci. U.S.A.">
        <title>Comparison of the complete genome sequences of Pseudomonas syringae pv. syringae B728a and pv. tomato DC3000.</title>
        <authorList>
            <person name="Feil H."/>
            <person name="Feil W.S."/>
            <person name="Chain P."/>
            <person name="Larimer F."/>
            <person name="Dibartolo G."/>
            <person name="Copeland A."/>
            <person name="Lykidis A."/>
            <person name="Trong S."/>
            <person name="Nolan M."/>
            <person name="Goltsman E."/>
            <person name="Thiel J."/>
            <person name="Malfatti S."/>
            <person name="Loper J.E."/>
            <person name="Lapidus A."/>
            <person name="Detter J.C."/>
            <person name="Land M."/>
            <person name="Richardson P.M."/>
            <person name="Kyrpides N.C."/>
            <person name="Ivanova N."/>
            <person name="Lindow S.E."/>
        </authorList>
    </citation>
    <scope>NUCLEOTIDE SEQUENCE [LARGE SCALE GENOMIC DNA]</scope>
    <source>
        <strain>B728a</strain>
    </source>
</reference>